<comment type="function">
    <text evidence="1">DNA-dependent RNA polymerase catalyzes the transcription of DNA into RNA using the four ribonucleoside triphosphates as substrates.</text>
</comment>
<comment type="catalytic activity">
    <reaction evidence="1">
        <text>RNA(n) + a ribonucleoside 5'-triphosphate = RNA(n+1) + diphosphate</text>
        <dbReference type="Rhea" id="RHEA:21248"/>
        <dbReference type="Rhea" id="RHEA-COMP:14527"/>
        <dbReference type="Rhea" id="RHEA-COMP:17342"/>
        <dbReference type="ChEBI" id="CHEBI:33019"/>
        <dbReference type="ChEBI" id="CHEBI:61557"/>
        <dbReference type="ChEBI" id="CHEBI:140395"/>
        <dbReference type="EC" id="2.7.7.6"/>
    </reaction>
</comment>
<comment type="subunit">
    <text evidence="1">The RNAP catalytic core consists of 2 alpha, 1 beta, 1 beta' and 1 omega subunit. When a sigma factor is associated with the core the holoenzyme is formed, which can initiate transcription.</text>
</comment>
<comment type="similarity">
    <text evidence="1">Belongs to the RNA polymerase beta chain family.</text>
</comment>
<name>RPOB_RICM5</name>
<organism>
    <name type="scientific">Rickettsia massiliae (strain Mtu5)</name>
    <dbReference type="NCBI Taxonomy" id="416276"/>
    <lineage>
        <taxon>Bacteria</taxon>
        <taxon>Pseudomonadati</taxon>
        <taxon>Pseudomonadota</taxon>
        <taxon>Alphaproteobacteria</taxon>
        <taxon>Rickettsiales</taxon>
        <taxon>Rickettsiaceae</taxon>
        <taxon>Rickettsieae</taxon>
        <taxon>Rickettsia</taxon>
        <taxon>spotted fever group</taxon>
    </lineage>
</organism>
<accession>A8F0P7</accession>
<protein>
    <recommendedName>
        <fullName evidence="1">DNA-directed RNA polymerase subunit beta</fullName>
        <shortName evidence="1">RNAP subunit beta</shortName>
        <ecNumber evidence="1">2.7.7.6</ecNumber>
    </recommendedName>
    <alternativeName>
        <fullName evidence="1">RNA polymerase subunit beta</fullName>
    </alternativeName>
    <alternativeName>
        <fullName evidence="1">Transcriptase subunit beta</fullName>
    </alternativeName>
</protein>
<sequence>MVSLRDNIEAQPLSHNRRIRKNFGHINLVADIPNLIEIQKNSYEKNFLQLNIKDSERKNKGLQSILNSIFPISDSSNIANLEFVKYEFDTPKYDVEECSQRSLSYAAPLKVTLRLSIWDIDEDTGTREIKGIKEQEVYMGDIPLMTKNGTFIINGTERVVVSQMHRSPGVFFYHDEGKVHSSGKLLYSARVIPYRGSWLDLEFDAKDVIYFRIDRKRKLYITTLLRAIGMSTEEIIKFYYNSVTYKLVKNKGWAVKFIPQHITAHRLTSDLVDADTGNILLKAGQKITPRLAKKYFGEGLNNILVAHETLIGKYLSEDLRDPTSDEVLAKIGEMITADMLNVINALKIKNVNVLVINPQSGPYIRNTLFADKNQDREAALCDIFRVLRPGEPANIEAAESLFYNLFFDVERYDLSEVGRIKMNSRLELNISEEVTVLTIDDIKNIVRVLVELKDGKGIIDDIDHLGNRRVRSVGELIENQFRIGLVRMEKSVIERMSAGDVDTVMPHDLVNSKILVSVVKEFFNTSQLSQFMDQTNPLSEITHKRRLSALGPGGLSRDRAGFEVRDVHPTHYGRICPIETPEGQNIGLINSMATYARINKHGFIESPYRRVKDGCVTDEVVYLSAIEEGKYKIGQANSKVNKDGKLQGEFINCRVEGGNFVMVEPYEVDFIDVTPMQVVSVAASLIPFLENDDANRALMGSNMQRQAVPLIKTDAPFVGTGVEGVVAKDSGASVLALHDGIVEQVDSNRIVIRTLEQKVDGSPSVDIYNLLKFQKSNHNTCINQKPLVKVGHYVKKNDIIADGPSTDNGEIALGRNVLVAFLPWNGYNFEDSILISERIVKEDVFTSIHIEEFEVIARDTRLGPEEITRDIPNVSEEALRHLDEVGIIYIGAEVKAGDILVGKVTPKSESPITPEEKLLRAIFGEKAFDVKDSSLHVPSGVSGTVVEVRVFSRRGVEKDQRAIAIEKQQIEKLAKDRDDELEIIEHFVFSWLEKLLVGQVIINGPKQVKVGQTITTEMLKGLSKGQFWQITVEDANVMNEIEQIKTHYDEKKEALDKRFATKVEKLQSGDDLPQGALKVVKVFIATKHKLQPGDKMAGRHGNKGVISRIVPEEDMPFLEDGTVVDIVLNPLGLPSRMNIGQILETHLGWASINLAKKISTLVKEYKNKHIGIEQIKKFLIELYGENINSILERPEEEIISFCKKVSKGVHFATPVFDGAKVQDVKDMLKLAGQDPSGQVKLIDGRTGEYFDRLVTVGQKYLLKLHHLVDNKIHSRSIGPYSLVTQQPLGGKSHFGGQRFGEMECWALQAYGAAYTLQEMLTVKSDDVNGRIKTYDSIVRGENNFESGIPESFNVMIKEFRSLCLNVKLEVTSS</sequence>
<evidence type="ECO:0000255" key="1">
    <source>
        <dbReference type="HAMAP-Rule" id="MF_01321"/>
    </source>
</evidence>
<reference key="1">
    <citation type="journal article" date="2007" name="Genome Res.">
        <title>Lateral gene transfer between obligate intracellular bacteria: evidence from the Rickettsia massiliae genome.</title>
        <authorList>
            <person name="Blanc G."/>
            <person name="Ogata H."/>
            <person name="Robert C."/>
            <person name="Audic S."/>
            <person name="Claverie J.-M."/>
            <person name="Raoult D."/>
        </authorList>
    </citation>
    <scope>NUCLEOTIDE SEQUENCE [LARGE SCALE GENOMIC DNA]</scope>
    <source>
        <strain>Mtu5</strain>
    </source>
</reference>
<keyword id="KW-0240">DNA-directed RNA polymerase</keyword>
<keyword id="KW-0548">Nucleotidyltransferase</keyword>
<keyword id="KW-0804">Transcription</keyword>
<keyword id="KW-0808">Transferase</keyword>
<feature type="chain" id="PRO_1000067552" description="DNA-directed RNA polymerase subunit beta">
    <location>
        <begin position="1"/>
        <end position="1373"/>
    </location>
</feature>
<gene>
    <name evidence="1" type="primary">rpoB</name>
    <name type="ordered locus">RMA_0189</name>
</gene>
<proteinExistence type="inferred from homology"/>
<dbReference type="EC" id="2.7.7.6" evidence="1"/>
<dbReference type="EMBL" id="CP000683">
    <property type="protein sequence ID" value="ABV84483.1"/>
    <property type="molecule type" value="Genomic_DNA"/>
</dbReference>
<dbReference type="RefSeq" id="WP_012152461.1">
    <property type="nucleotide sequence ID" value="NC_009900.1"/>
</dbReference>
<dbReference type="SMR" id="A8F0P7"/>
<dbReference type="KEGG" id="rms:RMA_0189"/>
<dbReference type="HOGENOM" id="CLU_000524_4_0_5"/>
<dbReference type="Proteomes" id="UP000001311">
    <property type="component" value="Chromosome"/>
</dbReference>
<dbReference type="GO" id="GO:0000428">
    <property type="term" value="C:DNA-directed RNA polymerase complex"/>
    <property type="evidence" value="ECO:0007669"/>
    <property type="project" value="UniProtKB-KW"/>
</dbReference>
<dbReference type="GO" id="GO:0003677">
    <property type="term" value="F:DNA binding"/>
    <property type="evidence" value="ECO:0007669"/>
    <property type="project" value="UniProtKB-UniRule"/>
</dbReference>
<dbReference type="GO" id="GO:0003899">
    <property type="term" value="F:DNA-directed RNA polymerase activity"/>
    <property type="evidence" value="ECO:0007669"/>
    <property type="project" value="UniProtKB-UniRule"/>
</dbReference>
<dbReference type="GO" id="GO:0032549">
    <property type="term" value="F:ribonucleoside binding"/>
    <property type="evidence" value="ECO:0007669"/>
    <property type="project" value="InterPro"/>
</dbReference>
<dbReference type="GO" id="GO:0006351">
    <property type="term" value="P:DNA-templated transcription"/>
    <property type="evidence" value="ECO:0007669"/>
    <property type="project" value="UniProtKB-UniRule"/>
</dbReference>
<dbReference type="CDD" id="cd00653">
    <property type="entry name" value="RNA_pol_B_RPB2"/>
    <property type="match status" value="1"/>
</dbReference>
<dbReference type="Gene3D" id="2.40.50.100">
    <property type="match status" value="1"/>
</dbReference>
<dbReference type="Gene3D" id="2.40.50.150">
    <property type="match status" value="1"/>
</dbReference>
<dbReference type="Gene3D" id="3.90.1100.10">
    <property type="match status" value="2"/>
</dbReference>
<dbReference type="Gene3D" id="2.30.150.10">
    <property type="entry name" value="DNA-directed RNA polymerase, beta subunit, external 1 domain"/>
    <property type="match status" value="1"/>
</dbReference>
<dbReference type="Gene3D" id="2.40.270.10">
    <property type="entry name" value="DNA-directed RNA polymerase, subunit 2, domain 6"/>
    <property type="match status" value="2"/>
</dbReference>
<dbReference type="Gene3D" id="3.90.1800.10">
    <property type="entry name" value="RNA polymerase alpha subunit dimerisation domain"/>
    <property type="match status" value="1"/>
</dbReference>
<dbReference type="Gene3D" id="3.90.1110.10">
    <property type="entry name" value="RNA polymerase Rpb2, domain 2"/>
    <property type="match status" value="2"/>
</dbReference>
<dbReference type="HAMAP" id="MF_01321">
    <property type="entry name" value="RNApol_bact_RpoB"/>
    <property type="match status" value="1"/>
</dbReference>
<dbReference type="InterPro" id="IPR042107">
    <property type="entry name" value="DNA-dir_RNA_pol_bsu_ext_1_sf"/>
</dbReference>
<dbReference type="InterPro" id="IPR019462">
    <property type="entry name" value="DNA-dir_RNA_pol_bsu_external_1"/>
</dbReference>
<dbReference type="InterPro" id="IPR015712">
    <property type="entry name" value="DNA-dir_RNA_pol_su2"/>
</dbReference>
<dbReference type="InterPro" id="IPR007120">
    <property type="entry name" value="DNA-dir_RNAP_su2_dom"/>
</dbReference>
<dbReference type="InterPro" id="IPR037033">
    <property type="entry name" value="DNA-dir_RNAP_su2_hyb_sf"/>
</dbReference>
<dbReference type="InterPro" id="IPR010243">
    <property type="entry name" value="RNA_pol_bsu_bac"/>
</dbReference>
<dbReference type="InterPro" id="IPR007121">
    <property type="entry name" value="RNA_pol_bsu_CS"/>
</dbReference>
<dbReference type="InterPro" id="IPR007644">
    <property type="entry name" value="RNA_pol_bsu_protrusion"/>
</dbReference>
<dbReference type="InterPro" id="IPR007642">
    <property type="entry name" value="RNA_pol_Rpb2_2"/>
</dbReference>
<dbReference type="InterPro" id="IPR037034">
    <property type="entry name" value="RNA_pol_Rpb2_2_sf"/>
</dbReference>
<dbReference type="InterPro" id="IPR007645">
    <property type="entry name" value="RNA_pol_Rpb2_3"/>
</dbReference>
<dbReference type="InterPro" id="IPR007641">
    <property type="entry name" value="RNA_pol_Rpb2_7"/>
</dbReference>
<dbReference type="InterPro" id="IPR014724">
    <property type="entry name" value="RNA_pol_RPB2_OB-fold"/>
</dbReference>
<dbReference type="NCBIfam" id="NF001616">
    <property type="entry name" value="PRK00405.1"/>
    <property type="match status" value="1"/>
</dbReference>
<dbReference type="NCBIfam" id="TIGR02013">
    <property type="entry name" value="rpoB"/>
    <property type="match status" value="1"/>
</dbReference>
<dbReference type="PANTHER" id="PTHR20856">
    <property type="entry name" value="DNA-DIRECTED RNA POLYMERASE I SUBUNIT 2"/>
    <property type="match status" value="1"/>
</dbReference>
<dbReference type="Pfam" id="PF04563">
    <property type="entry name" value="RNA_pol_Rpb2_1"/>
    <property type="match status" value="1"/>
</dbReference>
<dbReference type="Pfam" id="PF04561">
    <property type="entry name" value="RNA_pol_Rpb2_2"/>
    <property type="match status" value="2"/>
</dbReference>
<dbReference type="Pfam" id="PF04565">
    <property type="entry name" value="RNA_pol_Rpb2_3"/>
    <property type="match status" value="1"/>
</dbReference>
<dbReference type="Pfam" id="PF10385">
    <property type="entry name" value="RNA_pol_Rpb2_45"/>
    <property type="match status" value="1"/>
</dbReference>
<dbReference type="Pfam" id="PF00562">
    <property type="entry name" value="RNA_pol_Rpb2_6"/>
    <property type="match status" value="1"/>
</dbReference>
<dbReference type="Pfam" id="PF04560">
    <property type="entry name" value="RNA_pol_Rpb2_7"/>
    <property type="match status" value="1"/>
</dbReference>
<dbReference type="SUPFAM" id="SSF64484">
    <property type="entry name" value="beta and beta-prime subunits of DNA dependent RNA-polymerase"/>
    <property type="match status" value="1"/>
</dbReference>
<dbReference type="PROSITE" id="PS01166">
    <property type="entry name" value="RNA_POL_BETA"/>
    <property type="match status" value="1"/>
</dbReference>